<organism>
    <name type="scientific">Saccharomyces cerevisiae (strain ATCC 204508 / S288c)</name>
    <name type="common">Baker's yeast</name>
    <dbReference type="NCBI Taxonomy" id="559292"/>
    <lineage>
        <taxon>Eukaryota</taxon>
        <taxon>Fungi</taxon>
        <taxon>Dikarya</taxon>
        <taxon>Ascomycota</taxon>
        <taxon>Saccharomycotina</taxon>
        <taxon>Saccharomycetes</taxon>
        <taxon>Saccharomycetales</taxon>
        <taxon>Saccharomycetaceae</taxon>
        <taxon>Saccharomyces</taxon>
    </lineage>
</organism>
<reference key="1">
    <citation type="journal article" date="1992" name="Nature">
        <title>The complete DNA sequence of yeast chromosome III.</title>
        <authorList>
            <person name="Oliver S.G."/>
            <person name="van der Aart Q.J.M."/>
            <person name="Agostoni-Carbone M.L."/>
            <person name="Aigle M."/>
            <person name="Alberghina L."/>
            <person name="Alexandraki D."/>
            <person name="Antoine G."/>
            <person name="Anwar R."/>
            <person name="Ballesta J.P.G."/>
            <person name="Benit P."/>
            <person name="Berben G."/>
            <person name="Bergantino E."/>
            <person name="Biteau N."/>
            <person name="Bolle P.-A."/>
            <person name="Bolotin-Fukuhara M."/>
            <person name="Brown A."/>
            <person name="Brown A.J.P."/>
            <person name="Buhler J.-M."/>
            <person name="Carcano C."/>
            <person name="Carignani G."/>
            <person name="Cederberg H."/>
            <person name="Chanet R."/>
            <person name="Contreras R."/>
            <person name="Crouzet M."/>
            <person name="Daignan-Fornier B."/>
            <person name="Defoor E."/>
            <person name="Delgado M.D."/>
            <person name="Demolder J."/>
            <person name="Doira C."/>
            <person name="Dubois E."/>
            <person name="Dujon B."/>
            <person name="Duesterhoeft A."/>
            <person name="Erdmann D."/>
            <person name="Esteban M."/>
            <person name="Fabre F."/>
            <person name="Fairhead C."/>
            <person name="Faye G."/>
            <person name="Feldmann H."/>
            <person name="Fiers W."/>
            <person name="Francingues-Gaillard M.-C."/>
            <person name="Franco L."/>
            <person name="Frontali L."/>
            <person name="Fukuhara H."/>
            <person name="Fuller L.J."/>
            <person name="Galland P."/>
            <person name="Gent M.E."/>
            <person name="Gigot D."/>
            <person name="Gilliquet V."/>
            <person name="Glansdorff N."/>
            <person name="Goffeau A."/>
            <person name="Grenson M."/>
            <person name="Grisanti P."/>
            <person name="Grivell L.A."/>
            <person name="de Haan M."/>
            <person name="Haasemann M."/>
            <person name="Hatat D."/>
            <person name="Hoenicka J."/>
            <person name="Hegemann J.H."/>
            <person name="Herbert C.J."/>
            <person name="Hilger F."/>
            <person name="Hohmann S."/>
            <person name="Hollenberg C.P."/>
            <person name="Huse K."/>
            <person name="Iborra F."/>
            <person name="Indge K.J."/>
            <person name="Isono K."/>
            <person name="Jacq C."/>
            <person name="Jacquet M."/>
            <person name="James C.M."/>
            <person name="Jauniaux J.-C."/>
            <person name="Jia Y."/>
            <person name="Jimenez A."/>
            <person name="Kelly A."/>
            <person name="Kleinhans U."/>
            <person name="Kreisl P."/>
            <person name="Lanfranchi G."/>
            <person name="Lewis C."/>
            <person name="van der Linden C.G."/>
            <person name="Lucchini G."/>
            <person name="Lutzenkirchen K."/>
            <person name="Maat M.J."/>
            <person name="Mallet L."/>
            <person name="Mannhaupt G."/>
            <person name="Martegani E."/>
            <person name="Mathieu A."/>
            <person name="Maurer C.T.C."/>
            <person name="McConnell D."/>
            <person name="McKee R.A."/>
            <person name="Messenguy F."/>
            <person name="Mewes H.-W."/>
            <person name="Molemans F."/>
            <person name="Montague M.A."/>
            <person name="Muzi Falconi M."/>
            <person name="Navas L."/>
            <person name="Newlon C.S."/>
            <person name="Noone D."/>
            <person name="Pallier C."/>
            <person name="Panzeri L."/>
            <person name="Pearson B.M."/>
            <person name="Perea J."/>
            <person name="Philippsen P."/>
            <person name="Pierard A."/>
            <person name="Planta R.J."/>
            <person name="Plevani P."/>
            <person name="Poetsch B."/>
            <person name="Pohl F.M."/>
            <person name="Purnelle B."/>
            <person name="Ramezani Rad M."/>
            <person name="Rasmussen S.W."/>
            <person name="Raynal A."/>
            <person name="Remacha M.A."/>
            <person name="Richterich P."/>
            <person name="Roberts A.B."/>
            <person name="Rodriguez F."/>
            <person name="Sanz E."/>
            <person name="Schaaff-Gerstenschlaeger I."/>
            <person name="Scherens B."/>
            <person name="Schweitzer B."/>
            <person name="Shu Y."/>
            <person name="Skala J."/>
            <person name="Slonimski P.P."/>
            <person name="Sor F."/>
            <person name="Soustelle C."/>
            <person name="Spiegelberg R."/>
            <person name="Stateva L.I."/>
            <person name="Steensma H.Y."/>
            <person name="Steiner S."/>
            <person name="Thierry A."/>
            <person name="Thireos G."/>
            <person name="Tzermia M."/>
            <person name="Urrestarazu L.A."/>
            <person name="Valle G."/>
            <person name="Vetter I."/>
            <person name="van Vliet-Reedijk J.C."/>
            <person name="Voet M."/>
            <person name="Volckaert G."/>
            <person name="Vreken P."/>
            <person name="Wang H."/>
            <person name="Warmington J.R."/>
            <person name="von Wettstein D."/>
            <person name="Wicksteed B.L."/>
            <person name="Wilson C."/>
            <person name="Wurst H."/>
            <person name="Xu G."/>
            <person name="Yoshikawa A."/>
            <person name="Zimmermann F.K."/>
            <person name="Sgouros J.G."/>
        </authorList>
    </citation>
    <scope>NUCLEOTIDE SEQUENCE [LARGE SCALE GENOMIC DNA]</scope>
    <source>
        <strain>ATCC 204508 / S288c</strain>
    </source>
</reference>
<reference key="2">
    <citation type="journal article" date="2014" name="G3 (Bethesda)">
        <title>The reference genome sequence of Saccharomyces cerevisiae: Then and now.</title>
        <authorList>
            <person name="Engel S.R."/>
            <person name="Dietrich F.S."/>
            <person name="Fisk D.G."/>
            <person name="Binkley G."/>
            <person name="Balakrishnan R."/>
            <person name="Costanzo M.C."/>
            <person name="Dwight S.S."/>
            <person name="Hitz B.C."/>
            <person name="Karra K."/>
            <person name="Nash R.S."/>
            <person name="Weng S."/>
            <person name="Wong E.D."/>
            <person name="Lloyd P."/>
            <person name="Skrzypek M.S."/>
            <person name="Miyasato S.R."/>
            <person name="Simison M."/>
            <person name="Cherry J.M."/>
        </authorList>
    </citation>
    <scope>GENOME REANNOTATION</scope>
    <source>
        <strain>ATCC 204508 / S288c</strain>
    </source>
</reference>
<reference key="3">
    <citation type="journal article" date="1992" name="Yeast">
        <title>Sequence of the HMR region on chromosome III of Saccharomyces cerevisiae.</title>
        <authorList>
            <person name="Sor F."/>
            <person name="Cheret G."/>
            <person name="Fabre F."/>
            <person name="Faye G."/>
            <person name="Fukuhara H."/>
        </authorList>
    </citation>
    <scope>NUCLEOTIDE SEQUENCE [GENOMIC DNA] OF 1-113</scope>
</reference>
<reference key="4">
    <citation type="journal article" date="2003" name="Nature">
        <title>Global analysis of protein localization in budding yeast.</title>
        <authorList>
            <person name="Huh W.-K."/>
            <person name="Falvo J.V."/>
            <person name="Gerke L.C."/>
            <person name="Carroll A.S."/>
            <person name="Howson R.W."/>
            <person name="Weissman J.S."/>
            <person name="O'Shea E.K."/>
        </authorList>
    </citation>
    <scope>SUBCELLULAR LOCATION [LARGE SCALE ANALYSIS]</scope>
</reference>
<reference key="5">
    <citation type="journal article" date="2003" name="Nature">
        <title>Global analysis of protein expression in yeast.</title>
        <authorList>
            <person name="Ghaemmaghami S."/>
            <person name="Huh W.-K."/>
            <person name="Bower K."/>
            <person name="Howson R.W."/>
            <person name="Belle A."/>
            <person name="Dephoure N."/>
            <person name="O'Shea E.K."/>
            <person name="Weissman J.S."/>
        </authorList>
    </citation>
    <scope>LEVEL OF PROTEIN EXPRESSION [LARGE SCALE ANALYSIS]</scope>
</reference>
<reference key="6">
    <citation type="journal article" date="2003" name="Proc. Natl. Acad. Sci. U.S.A.">
        <title>Systematic, genome-wide identification of host genes affecting replication of a positive-strand RNA virus.</title>
        <authorList>
            <person name="Kushner D.B."/>
            <person name="Lindenbach B.D."/>
            <person name="Grdzelishvili V.Z."/>
            <person name="Noueiry A.O."/>
            <person name="Paul S.M."/>
            <person name="Ahlquist P."/>
        </authorList>
    </citation>
    <scope>FUNCTION</scope>
</reference>
<reference key="7">
    <citation type="journal article" date="2007" name="Proc. Natl. Acad. Sci. U.S.A.">
        <title>Analysis of phosphorylation sites on proteins from Saccharomyces cerevisiae by electron transfer dissociation (ETD) mass spectrometry.</title>
        <authorList>
            <person name="Chi A."/>
            <person name="Huttenhower C."/>
            <person name="Geer L.Y."/>
            <person name="Coon J.J."/>
            <person name="Syka J.E.P."/>
            <person name="Bai D.L."/>
            <person name="Shabanowitz J."/>
            <person name="Burke D.J."/>
            <person name="Troyanskaya O.G."/>
            <person name="Hunt D.F."/>
        </authorList>
    </citation>
    <scope>IDENTIFICATION BY MASS SPECTROMETRY [LARGE SCALE ANALYSIS]</scope>
</reference>
<reference key="8">
    <citation type="journal article" date="2008" name="FEMS Yeast Res.">
        <title>Oxidant-induced cell-cycle delay in Saccharomyces cerevisiae: the involvement of the SWI6 transcription factor.</title>
        <authorList>
            <person name="Fong C.S."/>
            <person name="Temple M.D."/>
            <person name="Alic N."/>
            <person name="Chiu J."/>
            <person name="Durchdewald M."/>
            <person name="Thorpe G.W."/>
            <person name="Higgins V.J."/>
            <person name="Dawes I.W."/>
        </authorList>
    </citation>
    <scope>DISRUPTION PHENOTYPE</scope>
</reference>
<reference key="9">
    <citation type="journal article" date="2008" name="Genetics">
        <title>A genomewide suppressor and enhancer analysis of cdc13-1 reveals varied cellular processes influencing telomere capping in Saccharomyces cerevisiae.</title>
        <authorList>
            <person name="Addinall S.G."/>
            <person name="Downey M."/>
            <person name="Yu M."/>
            <person name="Zubko M.K."/>
            <person name="Dewar J."/>
            <person name="Leake A."/>
            <person name="Hallinan J."/>
            <person name="Shaw O."/>
            <person name="James K."/>
            <person name="Wilkinson D.J."/>
            <person name="Wipat A."/>
            <person name="Durocher D."/>
            <person name="Lydall D."/>
        </authorList>
    </citation>
    <scope>DISRUPTION PHENOTYPE</scope>
</reference>
<reference key="10">
    <citation type="journal article" date="2008" name="Mol. Cell. Proteomics">
        <title>A multidimensional chromatography technology for in-depth phosphoproteome analysis.</title>
        <authorList>
            <person name="Albuquerque C.P."/>
            <person name="Smolka M.B."/>
            <person name="Payne S.H."/>
            <person name="Bafna V."/>
            <person name="Eng J."/>
            <person name="Zhou H."/>
        </authorList>
    </citation>
    <scope>IDENTIFICATION BY MASS SPECTROMETRY [LARGE SCALE ANALYSIS]</scope>
</reference>
<reference key="11">
    <citation type="journal article" date="2009" name="Science">
        <title>Global analysis of Cdk1 substrate phosphorylation sites provides insights into evolution.</title>
        <authorList>
            <person name="Holt L.J."/>
            <person name="Tuch B.B."/>
            <person name="Villen J."/>
            <person name="Johnson A.D."/>
            <person name="Gygi S.P."/>
            <person name="Morgan D.O."/>
        </authorList>
    </citation>
    <scope>IDENTIFICATION BY MASS SPECTROMETRY [LARGE SCALE ANALYSIS]</scope>
</reference>
<keyword id="KW-1185">Reference proteome</keyword>
<feature type="chain" id="PRO_0000202581" description="Protein OCA4">
    <location>
        <begin position="1"/>
        <end position="362"/>
    </location>
</feature>
<sequence>MLVPPANFGIAEEGIYRCSKVETLNLSFLETLNLKTAIFIGGQEPSKFFKDFFTRSSIKWIVLRMSDFSAAAVPVKSSSVSNANLYSNNNSTLSLQEEKKKSTANGSQNSTTGDPVIQEELAYHLTDNDDLMLIKSTCLKRTFKTLLNVDNYNVLLVDKTALVIGILRKIQKWNIASIINEYRLFSGKNRNYFAETFLEIINIEIEQEKDNKTIVDNKAKKLPLENNRTHSIEYKANSGKLIRVNEDDLCREPEVPQRLLTLINQIETKVKNNKVLQVSGVLGDDLKKTSSDLGIFGHRYRLAFNKKENGDYGYYKARGKDNVKIRIPCDSELPDWFRFQRDLWEKENVPEEHHFYREHIFT</sequence>
<accession>P25366</accession>
<accession>D6VR95</accession>
<gene>
    <name type="primary">OCA4</name>
    <name type="ordered locus">YCR095C</name>
    <name type="ORF">YCR131</name>
    <name type="ORF">YCR95C</name>
</gene>
<comment type="function">
    <text evidence="2">Required for replication of Brome mosaic virus (BMV).</text>
</comment>
<comment type="interaction">
    <interactant intactId="EBI-22021">
        <id>P25366</id>
    </interactant>
    <interactant intactId="EBI-28814">
        <id>P50946</id>
        <label>OCA1</label>
    </interactant>
    <organismsDiffer>false</organismsDiffer>
    <experiments>3</experiments>
</comment>
<comment type="interaction">
    <interactant intactId="EBI-22021">
        <id>P25366</id>
    </interactant>
    <interactant intactId="EBI-24355">
        <id>P38738</id>
        <label>OCA5</label>
    </interactant>
    <organismsDiffer>false</organismsDiffer>
    <experiments>5</experiments>
</comment>
<comment type="disruption phenotype">
    <text evidence="3 4">Exhibits an absence of G1 checkpoint in response to linoleic acid hydroperoxide (LoaOOH) treatment. Rescues the temperature sensitivity of CDC13-1 mutant.</text>
</comment>
<comment type="miscellaneous">
    <text evidence="1">Present with 5370 molecules/cell in log phase SD medium.</text>
</comment>
<name>OCA4_YEAST</name>
<proteinExistence type="evidence at protein level"/>
<protein>
    <recommendedName>
        <fullName>Protein OCA4</fullName>
    </recommendedName>
    <alternativeName>
        <fullName>Oxidant-induced cell-cycle arrest protein 4</fullName>
    </alternativeName>
</protein>
<dbReference type="EMBL" id="X59720">
    <property type="protein sequence ID" value="CAA42250.1"/>
    <property type="molecule type" value="Genomic_DNA"/>
</dbReference>
<dbReference type="EMBL" id="BK006937">
    <property type="protein sequence ID" value="DAA07564.1"/>
    <property type="molecule type" value="Genomic_DNA"/>
</dbReference>
<dbReference type="PIR" id="S19511">
    <property type="entry name" value="S19511"/>
</dbReference>
<dbReference type="RefSeq" id="NP_010019.1">
    <property type="nucleotide sequence ID" value="NM_001178801.1"/>
</dbReference>
<dbReference type="SMR" id="P25366"/>
<dbReference type="BioGRID" id="31067">
    <property type="interactions" value="211"/>
</dbReference>
<dbReference type="DIP" id="DIP-5005N"/>
<dbReference type="FunCoup" id="P25366">
    <property type="interactions" value="53"/>
</dbReference>
<dbReference type="IntAct" id="P25366">
    <property type="interactions" value="10"/>
</dbReference>
<dbReference type="MINT" id="P25366"/>
<dbReference type="STRING" id="4932.YCR095C"/>
<dbReference type="iPTMnet" id="P25366"/>
<dbReference type="PaxDb" id="4932-YCR095C"/>
<dbReference type="PeptideAtlas" id="P25366"/>
<dbReference type="EnsemblFungi" id="YCR095C_mRNA">
    <property type="protein sequence ID" value="YCR095C"/>
    <property type="gene ID" value="YCR095C"/>
</dbReference>
<dbReference type="GeneID" id="850457"/>
<dbReference type="KEGG" id="sce:YCR095C"/>
<dbReference type="AGR" id="SGD:S000000691"/>
<dbReference type="SGD" id="S000000691">
    <property type="gene designation" value="OCA4"/>
</dbReference>
<dbReference type="VEuPathDB" id="FungiDB:YCR095C"/>
<dbReference type="eggNOG" id="KOG1572">
    <property type="taxonomic scope" value="Eukaryota"/>
</dbReference>
<dbReference type="GeneTree" id="ENSGT00940000176301"/>
<dbReference type="HOGENOM" id="CLU_036633_0_0_1"/>
<dbReference type="InParanoid" id="P25366"/>
<dbReference type="OMA" id="FQRDLWE"/>
<dbReference type="OrthoDB" id="6375174at2759"/>
<dbReference type="BioCyc" id="YEAST:G3O-29389-MONOMER"/>
<dbReference type="BioGRID-ORCS" id="850457">
    <property type="hits" value="1 hit in 10 CRISPR screens"/>
</dbReference>
<dbReference type="PRO" id="PR:P25366"/>
<dbReference type="Proteomes" id="UP000002311">
    <property type="component" value="Chromosome III"/>
</dbReference>
<dbReference type="RNAct" id="P25366">
    <property type="molecule type" value="protein"/>
</dbReference>
<dbReference type="GO" id="GO:0005737">
    <property type="term" value="C:cytoplasm"/>
    <property type="evidence" value="ECO:0007005"/>
    <property type="project" value="SGD"/>
</dbReference>
<dbReference type="GO" id="GO:0016791">
    <property type="term" value="F:phosphatase activity"/>
    <property type="evidence" value="ECO:0000318"/>
    <property type="project" value="GO_Central"/>
</dbReference>
<dbReference type="CDD" id="cd17662">
    <property type="entry name" value="PFA-DSP_Oca4"/>
    <property type="match status" value="1"/>
</dbReference>
<dbReference type="Gene3D" id="3.90.190.10">
    <property type="entry name" value="Protein tyrosine phosphatase superfamily"/>
    <property type="match status" value="1"/>
</dbReference>
<dbReference type="InterPro" id="IPR029021">
    <property type="entry name" value="Prot-tyrosine_phosphatase-like"/>
</dbReference>
<dbReference type="InterPro" id="IPR004861">
    <property type="entry name" value="Siw14-like"/>
</dbReference>
<dbReference type="PANTHER" id="PTHR31126:SF70">
    <property type="entry name" value="PROTEIN OCA4"/>
    <property type="match status" value="1"/>
</dbReference>
<dbReference type="PANTHER" id="PTHR31126">
    <property type="entry name" value="TYROSINE-PROTEIN PHOSPHATASE"/>
    <property type="match status" value="1"/>
</dbReference>
<dbReference type="Pfam" id="PF03162">
    <property type="entry name" value="Y_phosphatase2"/>
    <property type="match status" value="1"/>
</dbReference>
<dbReference type="SUPFAM" id="SSF52799">
    <property type="entry name" value="(Phosphotyrosine protein) phosphatases II"/>
    <property type="match status" value="1"/>
</dbReference>
<evidence type="ECO:0000269" key="1">
    <source>
    </source>
</evidence>
<evidence type="ECO:0000269" key="2">
    <source>
    </source>
</evidence>
<evidence type="ECO:0000269" key="3">
    <source>
    </source>
</evidence>
<evidence type="ECO:0000269" key="4">
    <source>
    </source>
</evidence>